<keyword id="KW-0067">ATP-binding</keyword>
<keyword id="KW-0997">Cell inner membrane</keyword>
<keyword id="KW-1003">Cell membrane</keyword>
<keyword id="KW-0378">Hydrolase</keyword>
<keyword id="KW-0418">Kinase</keyword>
<keyword id="KW-0460">Magnesium</keyword>
<keyword id="KW-0472">Membrane</keyword>
<keyword id="KW-0479">Metal-binding</keyword>
<keyword id="KW-0547">Nucleotide-binding</keyword>
<keyword id="KW-0597">Phosphoprotein</keyword>
<keyword id="KW-0904">Protein phosphatase</keyword>
<keyword id="KW-1185">Reference proteome</keyword>
<keyword id="KW-0808">Transferase</keyword>
<keyword id="KW-0812">Transmembrane</keyword>
<keyword id="KW-1133">Transmembrane helix</keyword>
<keyword id="KW-0902">Two-component regulatory system</keyword>
<keyword id="KW-0843">Virulence</keyword>
<organism>
    <name type="scientific">Shigella flexneri</name>
    <dbReference type="NCBI Taxonomy" id="623"/>
    <lineage>
        <taxon>Bacteria</taxon>
        <taxon>Pseudomonadati</taxon>
        <taxon>Pseudomonadota</taxon>
        <taxon>Gammaproteobacteria</taxon>
        <taxon>Enterobacterales</taxon>
        <taxon>Enterobacteriaceae</taxon>
        <taxon>Shigella</taxon>
    </lineage>
</organism>
<feature type="chain" id="PRO_0000074844" description="Virulence sensor protein PhoQ">
    <location>
        <begin position="1"/>
        <end position="486"/>
    </location>
</feature>
<feature type="topological domain" description="Cytoplasmic" evidence="2">
    <location>
        <begin position="1"/>
        <end position="16"/>
    </location>
</feature>
<feature type="transmembrane region" description="Helical" evidence="2">
    <location>
        <begin position="17"/>
        <end position="37"/>
    </location>
</feature>
<feature type="topological domain" description="Periplasmic" evidence="2">
    <location>
        <begin position="38"/>
        <end position="194"/>
    </location>
</feature>
<feature type="transmembrane region" description="Helical" evidence="2">
    <location>
        <begin position="195"/>
        <end position="215"/>
    </location>
</feature>
<feature type="topological domain" description="Cytoplasmic" evidence="2">
    <location>
        <begin position="216"/>
        <end position="486"/>
    </location>
</feature>
<feature type="domain" description="HAMP" evidence="3">
    <location>
        <begin position="215"/>
        <end position="266"/>
    </location>
</feature>
<feature type="domain" description="Histidine kinase" evidence="4">
    <location>
        <begin position="274"/>
        <end position="480"/>
    </location>
</feature>
<feature type="binding site" evidence="1">
    <location>
        <position position="151"/>
    </location>
    <ligand>
        <name>a divalent metal cation</name>
        <dbReference type="ChEBI" id="CHEBI:60240"/>
    </ligand>
</feature>
<feature type="binding site" evidence="1">
    <location>
        <position position="152"/>
    </location>
    <ligand>
        <name>a divalent metal cation</name>
        <dbReference type="ChEBI" id="CHEBI:60240"/>
    </ligand>
</feature>
<feature type="binding site" evidence="1">
    <location>
        <begin position="385"/>
        <end position="393"/>
    </location>
    <ligand>
        <name>ATP</name>
        <dbReference type="ChEBI" id="CHEBI:30616"/>
    </ligand>
</feature>
<feature type="binding site" evidence="1">
    <location>
        <position position="385"/>
    </location>
    <ligand>
        <name>Mg(2+)</name>
        <dbReference type="ChEBI" id="CHEBI:18420"/>
    </ligand>
</feature>
<feature type="binding site" evidence="1">
    <location>
        <begin position="415"/>
        <end position="420"/>
    </location>
    <ligand>
        <name>ATP</name>
        <dbReference type="ChEBI" id="CHEBI:30616"/>
    </ligand>
</feature>
<feature type="binding site" evidence="1">
    <location>
        <begin position="434"/>
        <end position="446"/>
    </location>
    <ligand>
        <name>ATP</name>
        <dbReference type="ChEBI" id="CHEBI:30616"/>
    </ligand>
</feature>
<feature type="binding site" evidence="1">
    <location>
        <position position="442"/>
    </location>
    <ligand>
        <name>Mg(2+)</name>
        <dbReference type="ChEBI" id="CHEBI:18420"/>
    </ligand>
</feature>
<feature type="site" description="Plays a critical role in the switching between kinase and phosphatase states" evidence="1">
    <location>
        <position position="202"/>
    </location>
</feature>
<feature type="modified residue" description="Phosphohistidine; by autocatalysis" evidence="4">
    <location>
        <position position="277"/>
    </location>
</feature>
<name>PHOQ_SHIFL</name>
<dbReference type="EC" id="2.7.13.3"/>
<dbReference type="EC" id="3.1.3.-"/>
<dbReference type="EMBL" id="AE005674">
    <property type="protein sequence ID" value="AAN42765.1"/>
    <property type="molecule type" value="Genomic_DNA"/>
</dbReference>
<dbReference type="EMBL" id="AE014073">
    <property type="protein sequence ID" value="AAP16654.1"/>
    <property type="molecule type" value="Genomic_DNA"/>
</dbReference>
<dbReference type="RefSeq" id="NP_707058.1">
    <property type="nucleotide sequence ID" value="NC_004337.2"/>
</dbReference>
<dbReference type="RefSeq" id="WP_000735425.1">
    <property type="nucleotide sequence ID" value="NZ_WPGW01000001.1"/>
</dbReference>
<dbReference type="SMR" id="Q83RR1"/>
<dbReference type="STRING" id="198214.SF1148"/>
<dbReference type="PaxDb" id="198214-SF1148"/>
<dbReference type="GeneID" id="1024096"/>
<dbReference type="KEGG" id="sfl:SF1148"/>
<dbReference type="KEGG" id="sfx:S1231"/>
<dbReference type="PATRIC" id="fig|198214.7.peg.1349"/>
<dbReference type="HOGENOM" id="CLU_000445_42_0_6"/>
<dbReference type="Proteomes" id="UP000001006">
    <property type="component" value="Chromosome"/>
</dbReference>
<dbReference type="Proteomes" id="UP000002673">
    <property type="component" value="Chromosome"/>
</dbReference>
<dbReference type="GO" id="GO:0005886">
    <property type="term" value="C:plasma membrane"/>
    <property type="evidence" value="ECO:0007669"/>
    <property type="project" value="UniProtKB-SubCell"/>
</dbReference>
<dbReference type="GO" id="GO:0005524">
    <property type="term" value="F:ATP binding"/>
    <property type="evidence" value="ECO:0007669"/>
    <property type="project" value="UniProtKB-KW"/>
</dbReference>
<dbReference type="GO" id="GO:0046872">
    <property type="term" value="F:metal ion binding"/>
    <property type="evidence" value="ECO:0007669"/>
    <property type="project" value="UniProtKB-KW"/>
</dbReference>
<dbReference type="GO" id="GO:0004721">
    <property type="term" value="F:phosphoprotein phosphatase activity"/>
    <property type="evidence" value="ECO:0007669"/>
    <property type="project" value="UniProtKB-KW"/>
</dbReference>
<dbReference type="GO" id="GO:0000155">
    <property type="term" value="F:phosphorelay sensor kinase activity"/>
    <property type="evidence" value="ECO:0007669"/>
    <property type="project" value="InterPro"/>
</dbReference>
<dbReference type="CDD" id="cd16954">
    <property type="entry name" value="HATPase_PhoQ-like"/>
    <property type="match status" value="1"/>
</dbReference>
<dbReference type="FunFam" id="1.10.287.130:FF:000013">
    <property type="entry name" value="Sensor histidine kinase PhoQ"/>
    <property type="match status" value="1"/>
</dbReference>
<dbReference type="FunFam" id="3.30.450.140:FF:000001">
    <property type="entry name" value="Virulence sensor histidine kinase PhoQ"/>
    <property type="match status" value="1"/>
</dbReference>
<dbReference type="FunFam" id="3.30.565.10:FF:000019">
    <property type="entry name" value="Virulence sensor histidine kinase PhoQ"/>
    <property type="match status" value="1"/>
</dbReference>
<dbReference type="Gene3D" id="1.10.287.130">
    <property type="match status" value="1"/>
</dbReference>
<dbReference type="Gene3D" id="3.30.450.140">
    <property type="match status" value="1"/>
</dbReference>
<dbReference type="Gene3D" id="3.30.565.10">
    <property type="entry name" value="Histidine kinase-like ATPase, C-terminal domain"/>
    <property type="match status" value="1"/>
</dbReference>
<dbReference type="InterPro" id="IPR003660">
    <property type="entry name" value="HAMP_dom"/>
</dbReference>
<dbReference type="InterPro" id="IPR036890">
    <property type="entry name" value="HATPase_C_sf"/>
</dbReference>
<dbReference type="InterPro" id="IPR005467">
    <property type="entry name" value="His_kinase_dom"/>
</dbReference>
<dbReference type="InterPro" id="IPR036097">
    <property type="entry name" value="HisK_dim/P_sf"/>
</dbReference>
<dbReference type="InterPro" id="IPR015014">
    <property type="entry name" value="PhoQ_Sensor"/>
</dbReference>
<dbReference type="InterPro" id="IPR038429">
    <property type="entry name" value="PhoQ_Sensor_sf"/>
</dbReference>
<dbReference type="InterPro" id="IPR004358">
    <property type="entry name" value="Sig_transdc_His_kin-like_C"/>
</dbReference>
<dbReference type="InterPro" id="IPR050428">
    <property type="entry name" value="TCS_sensor_his_kinase"/>
</dbReference>
<dbReference type="NCBIfam" id="NF008077">
    <property type="entry name" value="PRK10815.1"/>
    <property type="match status" value="1"/>
</dbReference>
<dbReference type="PANTHER" id="PTHR45436">
    <property type="entry name" value="SENSOR HISTIDINE KINASE YKOH"/>
    <property type="match status" value="1"/>
</dbReference>
<dbReference type="PANTHER" id="PTHR45436:SF4">
    <property type="entry name" value="SENSOR PROTEIN PHOQ"/>
    <property type="match status" value="1"/>
</dbReference>
<dbReference type="Pfam" id="PF02518">
    <property type="entry name" value="HATPase_c"/>
    <property type="match status" value="1"/>
</dbReference>
<dbReference type="Pfam" id="PF08918">
    <property type="entry name" value="PhoQ_Sensor"/>
    <property type="match status" value="1"/>
</dbReference>
<dbReference type="PRINTS" id="PR00344">
    <property type="entry name" value="BCTRLSENSOR"/>
</dbReference>
<dbReference type="SMART" id="SM00387">
    <property type="entry name" value="HATPase_c"/>
    <property type="match status" value="1"/>
</dbReference>
<dbReference type="SUPFAM" id="SSF55874">
    <property type="entry name" value="ATPase domain of HSP90 chaperone/DNA topoisomerase II/histidine kinase"/>
    <property type="match status" value="1"/>
</dbReference>
<dbReference type="SUPFAM" id="SSF47384">
    <property type="entry name" value="Homodimeric domain of signal transducing histidine kinase"/>
    <property type="match status" value="1"/>
</dbReference>
<dbReference type="PROSITE" id="PS50885">
    <property type="entry name" value="HAMP"/>
    <property type="match status" value="1"/>
</dbReference>
<dbReference type="PROSITE" id="PS50109">
    <property type="entry name" value="HIS_KIN"/>
    <property type="match status" value="1"/>
</dbReference>
<proteinExistence type="inferred from homology"/>
<evidence type="ECO:0000250" key="1"/>
<evidence type="ECO:0000255" key="2"/>
<evidence type="ECO:0000255" key="3">
    <source>
        <dbReference type="PROSITE-ProRule" id="PRU00102"/>
    </source>
</evidence>
<evidence type="ECO:0000255" key="4">
    <source>
        <dbReference type="PROSITE-ProRule" id="PRU00107"/>
    </source>
</evidence>
<evidence type="ECO:0000269" key="5">
    <source>
    </source>
</evidence>
<reference key="1">
    <citation type="journal article" date="2002" name="Nucleic Acids Res.">
        <title>Genome sequence of Shigella flexneri 2a: insights into pathogenicity through comparison with genomes of Escherichia coli K12 and O157.</title>
        <authorList>
            <person name="Jin Q."/>
            <person name="Yuan Z."/>
            <person name="Xu J."/>
            <person name="Wang Y."/>
            <person name="Shen Y."/>
            <person name="Lu W."/>
            <person name="Wang J."/>
            <person name="Liu H."/>
            <person name="Yang J."/>
            <person name="Yang F."/>
            <person name="Zhang X."/>
            <person name="Zhang J."/>
            <person name="Yang G."/>
            <person name="Wu H."/>
            <person name="Qu D."/>
            <person name="Dong J."/>
            <person name="Sun L."/>
            <person name="Xue Y."/>
            <person name="Zhao A."/>
            <person name="Gao Y."/>
            <person name="Zhu J."/>
            <person name="Kan B."/>
            <person name="Ding K."/>
            <person name="Chen S."/>
            <person name="Cheng H."/>
            <person name="Yao Z."/>
            <person name="He B."/>
            <person name="Chen R."/>
            <person name="Ma D."/>
            <person name="Qiang B."/>
            <person name="Wen Y."/>
            <person name="Hou Y."/>
            <person name="Yu J."/>
        </authorList>
    </citation>
    <scope>NUCLEOTIDE SEQUENCE [LARGE SCALE GENOMIC DNA]</scope>
    <source>
        <strain>301 / Serotype 2a</strain>
    </source>
</reference>
<reference key="2">
    <citation type="journal article" date="2003" name="Infect. Immun.">
        <title>Complete genome sequence and comparative genomics of Shigella flexneri serotype 2a strain 2457T.</title>
        <authorList>
            <person name="Wei J."/>
            <person name="Goldberg M.B."/>
            <person name="Burland V."/>
            <person name="Venkatesan M.M."/>
            <person name="Deng W."/>
            <person name="Fournier G."/>
            <person name="Mayhew G.F."/>
            <person name="Plunkett G. III"/>
            <person name="Rose D.J."/>
            <person name="Darling A."/>
            <person name="Mau B."/>
            <person name="Perna N.T."/>
            <person name="Payne S.M."/>
            <person name="Runyen-Janecky L.J."/>
            <person name="Zhou S."/>
            <person name="Schwartz D.C."/>
            <person name="Blattner F.R."/>
        </authorList>
    </citation>
    <scope>NUCLEOTIDE SEQUENCE [LARGE SCALE GENOMIC DNA]</scope>
    <source>
        <strain>ATCC 700930 / 2457T / Serotype 2a</strain>
    </source>
</reference>
<reference key="3">
    <citation type="journal article" date="2000" name="Cell. Microbiol.">
        <title>The regulatory protein PhoP controls susceptibility to the host inflammatory response in Shigella flexneri.</title>
        <authorList>
            <person name="Moss J.E."/>
            <person name="Fisher P.E."/>
            <person name="Vick B."/>
            <person name="Groisman E.A."/>
            <person name="Zychlinsky A."/>
        </authorList>
    </citation>
    <scope>FUNCTION</scope>
    <source>
        <strain>M90T / Serotype 5a</strain>
    </source>
</reference>
<comment type="function">
    <text evidence="1 5">Member of the two-component regulatory system PhoP/PhoQ involved in virulence and adaptation to low Mg(2+) environments. In low periplasmic Mg(2+), PhoQ functions as a membrane-associated protein kinase that undergoes autophosphorylation and subsequently transfers the phosphate to PhoP, which results in the expression of PhoP-activated genes (PAG) and repression of PhoP-repressed genes (PRG). In high periplasmic Mg(2+), acts as a protein phosphatase that dephosphorylates phospho-PhoP, which results in the repression of PAG and may lead to expression of some PRG (By similarity). Necessary for resistance to killing by polymorphonuclear leukocytes (PMNs) and cationic antimicrobial peptides (CAMP) they produce.</text>
</comment>
<comment type="catalytic activity">
    <reaction>
        <text>ATP + protein L-histidine = ADP + protein N-phospho-L-histidine.</text>
        <dbReference type="EC" id="2.7.13.3"/>
    </reaction>
</comment>
<comment type="subunit">
    <text evidence="1">Homodimer.</text>
</comment>
<comment type="subcellular location">
    <subcellularLocation>
        <location evidence="1">Cell inner membrane</location>
        <topology evidence="1">Multi-pass membrane protein</topology>
    </subcellularLocation>
</comment>
<gene>
    <name type="primary">phoQ</name>
    <name type="ordered locus">SF1148</name>
    <name type="ordered locus">S1231</name>
</gene>
<sequence length="486" mass="55300">MKKLLRLFFPLSLRVRFLLATAAVVLVLSLAYGMVALIGYSVSFDKTTFRLLRGESNLFYTLAQWENNKLHVELPENIDKQSPTMTLIYDENGQLLWAQRDVPWLMKMIQPDWLKSNGFHEIEADVNDTSLLLSGDHSIQQQLQEVREDDDDAEMTHSVAVNVYPATSRMPKLTIVVVDTIPVELKSSYMVWSWFIYVLSANLLLVIPLLWVAAWWSLRPIEALAKEVRELEEHNRELLNPATTRELTSLVRNLNRLLKSERERYDKYRTTLTDLTHSLKTPLAVLQSTLRSLRSEKMSVSDAEPVMLEQISRISQQIGYYLHRASMRGGTLLSRELHPVAPLLDNLTSALNKVYQRKGVNISLDISPEISFVGEQNDFVEVMGNVLDNACKYCLEFVEISARQTDEHLYIVVEDDGPGIPLSKREVIFDRGQRVDTLRPGQGVGLAVAREITEQYEGKIVAGESMLGGARMEVIFGRQHSAPKDE</sequence>
<accession>Q83RR1</accession>
<accession>Q7C203</accession>
<protein>
    <recommendedName>
        <fullName>Virulence sensor protein PhoQ</fullName>
        <ecNumber>2.7.13.3</ecNumber>
        <ecNumber>3.1.3.-</ecNumber>
    </recommendedName>
    <alternativeName>
        <fullName>Sensor histidine protein kinase/phosphatase PhoQ</fullName>
    </alternativeName>
</protein>